<name>RSMG_PASMU</name>
<keyword id="KW-0963">Cytoplasm</keyword>
<keyword id="KW-0489">Methyltransferase</keyword>
<keyword id="KW-1185">Reference proteome</keyword>
<keyword id="KW-0698">rRNA processing</keyword>
<keyword id="KW-0949">S-adenosyl-L-methionine</keyword>
<keyword id="KW-0808">Transferase</keyword>
<protein>
    <recommendedName>
        <fullName evidence="1">Ribosomal RNA small subunit methyltransferase G</fullName>
        <ecNumber evidence="1">2.1.1.170</ecNumber>
    </recommendedName>
    <alternativeName>
        <fullName evidence="1">16S rRNA 7-methylguanosine methyltransferase</fullName>
        <shortName evidence="1">16S rRNA m7G methyltransferase</shortName>
    </alternativeName>
</protein>
<proteinExistence type="inferred from homology"/>
<feature type="chain" id="PRO_0000184298" description="Ribosomal RNA small subunit methyltransferase G">
    <location>
        <begin position="1"/>
        <end position="210"/>
    </location>
</feature>
<feature type="binding site" evidence="1">
    <location>
        <position position="80"/>
    </location>
    <ligand>
        <name>S-adenosyl-L-methionine</name>
        <dbReference type="ChEBI" id="CHEBI:59789"/>
    </ligand>
</feature>
<feature type="binding site" evidence="1">
    <location>
        <position position="85"/>
    </location>
    <ligand>
        <name>S-adenosyl-L-methionine</name>
        <dbReference type="ChEBI" id="CHEBI:59789"/>
    </ligand>
</feature>
<feature type="binding site" evidence="1">
    <location>
        <begin position="131"/>
        <end position="132"/>
    </location>
    <ligand>
        <name>S-adenosyl-L-methionine</name>
        <dbReference type="ChEBI" id="CHEBI:59789"/>
    </ligand>
</feature>
<feature type="binding site" evidence="1">
    <location>
        <position position="146"/>
    </location>
    <ligand>
        <name>S-adenosyl-L-methionine</name>
        <dbReference type="ChEBI" id="CHEBI:59789"/>
    </ligand>
</feature>
<comment type="function">
    <text evidence="1">Specifically methylates the N7 position of guanine in position 527 of 16S rRNA.</text>
</comment>
<comment type="catalytic activity">
    <reaction evidence="1">
        <text>guanosine(527) in 16S rRNA + S-adenosyl-L-methionine = N(7)-methylguanosine(527) in 16S rRNA + S-adenosyl-L-homocysteine</text>
        <dbReference type="Rhea" id="RHEA:42732"/>
        <dbReference type="Rhea" id="RHEA-COMP:10209"/>
        <dbReference type="Rhea" id="RHEA-COMP:10210"/>
        <dbReference type="ChEBI" id="CHEBI:57856"/>
        <dbReference type="ChEBI" id="CHEBI:59789"/>
        <dbReference type="ChEBI" id="CHEBI:74269"/>
        <dbReference type="ChEBI" id="CHEBI:74480"/>
        <dbReference type="EC" id="2.1.1.170"/>
    </reaction>
</comment>
<comment type="subcellular location">
    <subcellularLocation>
        <location evidence="1">Cytoplasm</location>
    </subcellularLocation>
</comment>
<comment type="similarity">
    <text evidence="1">Belongs to the methyltransferase superfamily. RNA methyltransferase RsmG family.</text>
</comment>
<organism>
    <name type="scientific">Pasteurella multocida (strain Pm70)</name>
    <dbReference type="NCBI Taxonomy" id="272843"/>
    <lineage>
        <taxon>Bacteria</taxon>
        <taxon>Pseudomonadati</taxon>
        <taxon>Pseudomonadota</taxon>
        <taxon>Gammaproteobacteria</taxon>
        <taxon>Pasteurellales</taxon>
        <taxon>Pasteurellaceae</taxon>
        <taxon>Pasteurella</taxon>
    </lineage>
</organism>
<dbReference type="EC" id="2.1.1.170" evidence="1"/>
<dbReference type="EMBL" id="AE004439">
    <property type="protein sequence ID" value="AAK03570.1"/>
    <property type="molecule type" value="Genomic_DNA"/>
</dbReference>
<dbReference type="RefSeq" id="WP_005718046.1">
    <property type="nucleotide sequence ID" value="NC_002663.1"/>
</dbReference>
<dbReference type="SMR" id="P57946"/>
<dbReference type="STRING" id="272843.PM1486"/>
<dbReference type="EnsemblBacteria" id="AAK03570">
    <property type="protein sequence ID" value="AAK03570"/>
    <property type="gene ID" value="PM1486"/>
</dbReference>
<dbReference type="GeneID" id="77206954"/>
<dbReference type="KEGG" id="pmu:PM1486"/>
<dbReference type="HOGENOM" id="CLU_065341_2_2_6"/>
<dbReference type="OrthoDB" id="9808773at2"/>
<dbReference type="Proteomes" id="UP000000809">
    <property type="component" value="Chromosome"/>
</dbReference>
<dbReference type="GO" id="GO:0005829">
    <property type="term" value="C:cytosol"/>
    <property type="evidence" value="ECO:0007669"/>
    <property type="project" value="TreeGrafter"/>
</dbReference>
<dbReference type="GO" id="GO:0070043">
    <property type="term" value="F:rRNA (guanine-N7-)-methyltransferase activity"/>
    <property type="evidence" value="ECO:0007669"/>
    <property type="project" value="UniProtKB-UniRule"/>
</dbReference>
<dbReference type="CDD" id="cd02440">
    <property type="entry name" value="AdoMet_MTases"/>
    <property type="match status" value="1"/>
</dbReference>
<dbReference type="FunFam" id="3.40.50.150:FF:000032">
    <property type="entry name" value="Ribosomal RNA small subunit methyltransferase G"/>
    <property type="match status" value="1"/>
</dbReference>
<dbReference type="Gene3D" id="3.40.50.150">
    <property type="entry name" value="Vaccinia Virus protein VP39"/>
    <property type="match status" value="1"/>
</dbReference>
<dbReference type="HAMAP" id="MF_00074">
    <property type="entry name" value="16SrRNA_methyltr_G"/>
    <property type="match status" value="1"/>
</dbReference>
<dbReference type="InterPro" id="IPR003682">
    <property type="entry name" value="rRNA_ssu_MeTfrase_G"/>
</dbReference>
<dbReference type="InterPro" id="IPR029063">
    <property type="entry name" value="SAM-dependent_MTases_sf"/>
</dbReference>
<dbReference type="NCBIfam" id="TIGR00138">
    <property type="entry name" value="rsmG_gidB"/>
    <property type="match status" value="1"/>
</dbReference>
<dbReference type="PANTHER" id="PTHR31760">
    <property type="entry name" value="S-ADENOSYL-L-METHIONINE-DEPENDENT METHYLTRANSFERASES SUPERFAMILY PROTEIN"/>
    <property type="match status" value="1"/>
</dbReference>
<dbReference type="PANTHER" id="PTHR31760:SF0">
    <property type="entry name" value="S-ADENOSYL-L-METHIONINE-DEPENDENT METHYLTRANSFERASES SUPERFAMILY PROTEIN"/>
    <property type="match status" value="1"/>
</dbReference>
<dbReference type="Pfam" id="PF02527">
    <property type="entry name" value="GidB"/>
    <property type="match status" value="1"/>
</dbReference>
<dbReference type="PIRSF" id="PIRSF003078">
    <property type="entry name" value="GidB"/>
    <property type="match status" value="1"/>
</dbReference>
<dbReference type="SUPFAM" id="SSF53335">
    <property type="entry name" value="S-adenosyl-L-methionine-dependent methyltransferases"/>
    <property type="match status" value="1"/>
</dbReference>
<sequence length="210" mass="24008">MTNLEQQLSQKLEILLKQTALSITDQQKEQLIKLVLLLNKWNKAYNLTSVRDPMEMLVKHILDSVVVSPHLQGKHFIDVGTGPGLPGLPLAIVNPNKHFVLLDSLGKRISFIRNAIRELGLDNVEAVLSRVEEYHPEQPFDGVLSRAFASLKDMTDWCQHLPKQDGYFYALKGLYHQEEVEELSEKFTIQQVIRLQVPELIGERHLVIVK</sequence>
<gene>
    <name evidence="1" type="primary">rsmG</name>
    <name type="ordered locus">PM1486</name>
</gene>
<accession>P57946</accession>
<reference key="1">
    <citation type="journal article" date="2001" name="Proc. Natl. Acad. Sci. U.S.A.">
        <title>Complete genomic sequence of Pasteurella multocida Pm70.</title>
        <authorList>
            <person name="May B.J."/>
            <person name="Zhang Q."/>
            <person name="Li L.L."/>
            <person name="Paustian M.L."/>
            <person name="Whittam T.S."/>
            <person name="Kapur V."/>
        </authorList>
    </citation>
    <scope>NUCLEOTIDE SEQUENCE [LARGE SCALE GENOMIC DNA]</scope>
    <source>
        <strain>Pm70</strain>
    </source>
</reference>
<evidence type="ECO:0000255" key="1">
    <source>
        <dbReference type="HAMAP-Rule" id="MF_00074"/>
    </source>
</evidence>